<protein>
    <recommendedName>
        <fullName evidence="1">Phosphomethylpyrimidine synthase</fullName>
        <ecNumber evidence="1">4.1.99.17</ecNumber>
    </recommendedName>
    <alternativeName>
        <fullName evidence="1">Hydroxymethylpyrimidine phosphate synthase</fullName>
        <shortName evidence="1">HMP-P synthase</shortName>
        <shortName evidence="1">HMP-phosphate synthase</shortName>
        <shortName evidence="1">HMPP synthase</shortName>
    </alternativeName>
    <alternativeName>
        <fullName evidence="1">Thiamine biosynthesis protein ThiC</fullName>
    </alternativeName>
</protein>
<reference key="1">
    <citation type="journal article" date="2007" name="PLoS Genet.">
        <title>Patterns and implications of gene gain and loss in the evolution of Prochlorococcus.</title>
        <authorList>
            <person name="Kettler G.C."/>
            <person name="Martiny A.C."/>
            <person name="Huang K."/>
            <person name="Zucker J."/>
            <person name="Coleman M.L."/>
            <person name="Rodrigue S."/>
            <person name="Chen F."/>
            <person name="Lapidus A."/>
            <person name="Ferriera S."/>
            <person name="Johnson J."/>
            <person name="Steglich C."/>
            <person name="Church G.M."/>
            <person name="Richardson P."/>
            <person name="Chisholm S.W."/>
        </authorList>
    </citation>
    <scope>NUCLEOTIDE SEQUENCE [LARGE SCALE GENOMIC DNA]</scope>
    <source>
        <strain>MIT 9303</strain>
    </source>
</reference>
<organism>
    <name type="scientific">Prochlorococcus marinus (strain MIT 9303)</name>
    <dbReference type="NCBI Taxonomy" id="59922"/>
    <lineage>
        <taxon>Bacteria</taxon>
        <taxon>Bacillati</taxon>
        <taxon>Cyanobacteriota</taxon>
        <taxon>Cyanophyceae</taxon>
        <taxon>Synechococcales</taxon>
        <taxon>Prochlorococcaceae</taxon>
        <taxon>Prochlorococcus</taxon>
    </lineage>
</organism>
<proteinExistence type="inferred from homology"/>
<sequence>MRASWVAARKGQANVSQLHFARQGVVTQEMDYVARRENLPESLVMEEVARGRMIIPANINHANLEPMAIGIASSCKVNANIGASPNASDVAEELKKLELAVKYGADTVMDLSTGGVNLDEVRTAIINASPVPIGTVPVYQALESVHGSIEKLDEDDFLHIIEKHCQQGVDYQTIHAGLLIEHLPLVKGRLTGIVSRGGGILAQWMLYHHRQNPLFTRFDDICEIFKRYDCSFSLGDSLRPGCQHDASDAAQLAELKTLGELTKRAWAHDVQVMVEGPGHVPMDQIEFNVRKQMEECNEAPFYVLGPLVTDIAPGYDHITSAIGAAMAGWYGTAMLCYVTPKEHLGLPNPEDVREGLIAYKIAAHAADIARHRPGARDRDDELSRARYNFDWNKQFELSLDPERAKQYHDETLPADIYKQAEFCSMCGPKHCPMQTKITDEDLEGLEKSLKSKGKAELPA</sequence>
<accession>A2C642</accession>
<gene>
    <name evidence="1" type="primary">thiC</name>
    <name type="ordered locus">P9303_01971</name>
</gene>
<feature type="chain" id="PRO_1000004788" description="Phosphomethylpyrimidine synthase">
    <location>
        <begin position="1"/>
        <end position="459"/>
    </location>
</feature>
<feature type="binding site" evidence="1">
    <location>
        <position position="80"/>
    </location>
    <ligand>
        <name>substrate</name>
    </ligand>
</feature>
<feature type="binding site" evidence="1">
    <location>
        <position position="109"/>
    </location>
    <ligand>
        <name>substrate</name>
    </ligand>
</feature>
<feature type="binding site" evidence="1">
    <location>
        <position position="139"/>
    </location>
    <ligand>
        <name>substrate</name>
    </ligand>
</feature>
<feature type="binding site" evidence="1">
    <location>
        <position position="175"/>
    </location>
    <ligand>
        <name>substrate</name>
    </ligand>
</feature>
<feature type="binding site" evidence="1">
    <location>
        <begin position="195"/>
        <end position="197"/>
    </location>
    <ligand>
        <name>substrate</name>
    </ligand>
</feature>
<feature type="binding site" evidence="1">
    <location>
        <begin position="236"/>
        <end position="239"/>
    </location>
    <ligand>
        <name>substrate</name>
    </ligand>
</feature>
<feature type="binding site" evidence="1">
    <location>
        <position position="275"/>
    </location>
    <ligand>
        <name>substrate</name>
    </ligand>
</feature>
<feature type="binding site" evidence="1">
    <location>
        <position position="279"/>
    </location>
    <ligand>
        <name>Zn(2+)</name>
        <dbReference type="ChEBI" id="CHEBI:29105"/>
    </ligand>
</feature>
<feature type="binding site" evidence="1">
    <location>
        <position position="302"/>
    </location>
    <ligand>
        <name>substrate</name>
    </ligand>
</feature>
<feature type="binding site" evidence="1">
    <location>
        <position position="343"/>
    </location>
    <ligand>
        <name>Zn(2+)</name>
        <dbReference type="ChEBI" id="CHEBI:29105"/>
    </ligand>
</feature>
<feature type="binding site" evidence="1">
    <location>
        <position position="423"/>
    </location>
    <ligand>
        <name>[4Fe-4S] cluster</name>
        <dbReference type="ChEBI" id="CHEBI:49883"/>
        <note>4Fe-4S-S-AdoMet</note>
    </ligand>
</feature>
<feature type="binding site" evidence="1">
    <location>
        <position position="426"/>
    </location>
    <ligand>
        <name>[4Fe-4S] cluster</name>
        <dbReference type="ChEBI" id="CHEBI:49883"/>
        <note>4Fe-4S-S-AdoMet</note>
    </ligand>
</feature>
<feature type="binding site" evidence="1">
    <location>
        <position position="431"/>
    </location>
    <ligand>
        <name>[4Fe-4S] cluster</name>
        <dbReference type="ChEBI" id="CHEBI:49883"/>
        <note>4Fe-4S-S-AdoMet</note>
    </ligand>
</feature>
<name>THIC_PROM3</name>
<keyword id="KW-0004">4Fe-4S</keyword>
<keyword id="KW-0408">Iron</keyword>
<keyword id="KW-0411">Iron-sulfur</keyword>
<keyword id="KW-0456">Lyase</keyword>
<keyword id="KW-0479">Metal-binding</keyword>
<keyword id="KW-0949">S-adenosyl-L-methionine</keyword>
<keyword id="KW-0784">Thiamine biosynthesis</keyword>
<keyword id="KW-0862">Zinc</keyword>
<evidence type="ECO:0000255" key="1">
    <source>
        <dbReference type="HAMAP-Rule" id="MF_00089"/>
    </source>
</evidence>
<dbReference type="EC" id="4.1.99.17" evidence="1"/>
<dbReference type="EMBL" id="CP000554">
    <property type="protein sequence ID" value="ABM76952.1"/>
    <property type="molecule type" value="Genomic_DNA"/>
</dbReference>
<dbReference type="RefSeq" id="WP_011824881.1">
    <property type="nucleotide sequence ID" value="NC_008820.1"/>
</dbReference>
<dbReference type="SMR" id="A2C642"/>
<dbReference type="STRING" id="59922.P9303_01971"/>
<dbReference type="KEGG" id="pmf:P9303_01971"/>
<dbReference type="HOGENOM" id="CLU_013181_2_1_3"/>
<dbReference type="BioCyc" id="PMAR59922:G1G80-191-MONOMER"/>
<dbReference type="UniPathway" id="UPA00060"/>
<dbReference type="Proteomes" id="UP000002274">
    <property type="component" value="Chromosome"/>
</dbReference>
<dbReference type="GO" id="GO:0005829">
    <property type="term" value="C:cytosol"/>
    <property type="evidence" value="ECO:0007669"/>
    <property type="project" value="TreeGrafter"/>
</dbReference>
<dbReference type="GO" id="GO:0051539">
    <property type="term" value="F:4 iron, 4 sulfur cluster binding"/>
    <property type="evidence" value="ECO:0007669"/>
    <property type="project" value="UniProtKB-KW"/>
</dbReference>
<dbReference type="GO" id="GO:0016830">
    <property type="term" value="F:carbon-carbon lyase activity"/>
    <property type="evidence" value="ECO:0007669"/>
    <property type="project" value="InterPro"/>
</dbReference>
<dbReference type="GO" id="GO:0008270">
    <property type="term" value="F:zinc ion binding"/>
    <property type="evidence" value="ECO:0007669"/>
    <property type="project" value="UniProtKB-UniRule"/>
</dbReference>
<dbReference type="GO" id="GO:0009228">
    <property type="term" value="P:thiamine biosynthetic process"/>
    <property type="evidence" value="ECO:0007669"/>
    <property type="project" value="UniProtKB-KW"/>
</dbReference>
<dbReference type="GO" id="GO:0009229">
    <property type="term" value="P:thiamine diphosphate biosynthetic process"/>
    <property type="evidence" value="ECO:0007669"/>
    <property type="project" value="UniProtKB-UniRule"/>
</dbReference>
<dbReference type="FunFam" id="3.20.20.540:FF:000001">
    <property type="entry name" value="Phosphomethylpyrimidine synthase"/>
    <property type="match status" value="1"/>
</dbReference>
<dbReference type="Gene3D" id="6.10.250.620">
    <property type="match status" value="1"/>
</dbReference>
<dbReference type="Gene3D" id="3.20.20.540">
    <property type="entry name" value="Radical SAM ThiC family, central domain"/>
    <property type="match status" value="1"/>
</dbReference>
<dbReference type="HAMAP" id="MF_00089">
    <property type="entry name" value="ThiC"/>
    <property type="match status" value="1"/>
</dbReference>
<dbReference type="InterPro" id="IPR037509">
    <property type="entry name" value="ThiC"/>
</dbReference>
<dbReference type="InterPro" id="IPR038521">
    <property type="entry name" value="ThiC/Bza_core_dom"/>
</dbReference>
<dbReference type="InterPro" id="IPR002817">
    <property type="entry name" value="ThiC/BzaA/B"/>
</dbReference>
<dbReference type="NCBIfam" id="NF006763">
    <property type="entry name" value="PRK09284.1"/>
    <property type="match status" value="1"/>
</dbReference>
<dbReference type="NCBIfam" id="NF009895">
    <property type="entry name" value="PRK13352.1"/>
    <property type="match status" value="1"/>
</dbReference>
<dbReference type="NCBIfam" id="TIGR00190">
    <property type="entry name" value="thiC"/>
    <property type="match status" value="1"/>
</dbReference>
<dbReference type="PANTHER" id="PTHR30557:SF1">
    <property type="entry name" value="PHOSPHOMETHYLPYRIMIDINE SYNTHASE, CHLOROPLASTIC"/>
    <property type="match status" value="1"/>
</dbReference>
<dbReference type="PANTHER" id="PTHR30557">
    <property type="entry name" value="THIAMINE BIOSYNTHESIS PROTEIN THIC"/>
    <property type="match status" value="1"/>
</dbReference>
<dbReference type="Pfam" id="PF01964">
    <property type="entry name" value="ThiC_Rad_SAM"/>
    <property type="match status" value="1"/>
</dbReference>
<dbReference type="SFLD" id="SFLDF00407">
    <property type="entry name" value="phosphomethylpyrimidine_syntha"/>
    <property type="match status" value="1"/>
</dbReference>
<dbReference type="SFLD" id="SFLDG01114">
    <property type="entry name" value="phosphomethylpyrimidine_syntha"/>
    <property type="match status" value="1"/>
</dbReference>
<dbReference type="SFLD" id="SFLDS00113">
    <property type="entry name" value="Radical_SAM_Phosphomethylpyrim"/>
    <property type="match status" value="1"/>
</dbReference>
<comment type="function">
    <text evidence="1">Catalyzes the synthesis of the hydroxymethylpyrimidine phosphate (HMP-P) moiety of thiamine from aminoimidazole ribotide (AIR) in a radical S-adenosyl-L-methionine (SAM)-dependent reaction.</text>
</comment>
<comment type="catalytic activity">
    <reaction evidence="1">
        <text>5-amino-1-(5-phospho-beta-D-ribosyl)imidazole + S-adenosyl-L-methionine = 4-amino-2-methyl-5-(phosphooxymethyl)pyrimidine + CO + 5'-deoxyadenosine + formate + L-methionine + 3 H(+)</text>
        <dbReference type="Rhea" id="RHEA:24840"/>
        <dbReference type="ChEBI" id="CHEBI:15378"/>
        <dbReference type="ChEBI" id="CHEBI:15740"/>
        <dbReference type="ChEBI" id="CHEBI:17245"/>
        <dbReference type="ChEBI" id="CHEBI:17319"/>
        <dbReference type="ChEBI" id="CHEBI:57844"/>
        <dbReference type="ChEBI" id="CHEBI:58354"/>
        <dbReference type="ChEBI" id="CHEBI:59789"/>
        <dbReference type="ChEBI" id="CHEBI:137981"/>
        <dbReference type="EC" id="4.1.99.17"/>
    </reaction>
</comment>
<comment type="cofactor">
    <cofactor evidence="1">
        <name>[4Fe-4S] cluster</name>
        <dbReference type="ChEBI" id="CHEBI:49883"/>
    </cofactor>
    <text evidence="1">Binds 1 [4Fe-4S] cluster per subunit. The cluster is coordinated with 3 cysteines and an exchangeable S-adenosyl-L-methionine.</text>
</comment>
<comment type="pathway">
    <text evidence="1">Cofactor biosynthesis; thiamine diphosphate biosynthesis.</text>
</comment>
<comment type="similarity">
    <text evidence="1">Belongs to the ThiC family.</text>
</comment>